<evidence type="ECO:0000255" key="1">
    <source>
        <dbReference type="HAMAP-Rule" id="MF_00050"/>
    </source>
</evidence>
<feature type="chain" id="PRO_0000161070" description="Elongation factor Ts">
    <location>
        <begin position="1"/>
        <end position="295"/>
    </location>
</feature>
<feature type="region of interest" description="Involved in Mg(2+) ion dislocation from EF-Tu" evidence="1">
    <location>
        <begin position="79"/>
        <end position="82"/>
    </location>
</feature>
<sequence length="295" mass="32479">MAITAQMVKELREKTGAGMMDCKKALTETNGDMEKAIDFLREKGIAKAAKKADRIAAEGLTFIETNGNDALILELNSETDFVAKNEGFQTLIKELAAHLLTNKPANVEEAMAQTMENGKKVEEHINEAIAKIGEKLTLRRFEIVSKTDADAFGAYLHMGGRIGVLTVLEGSTDEAAAKDVAMHIAAVNPKYIDRDAVTAEEVEHERQVLTQQALNEGKPEKIVAKMVEGRLGKFFEEICLLDQAFVKNPDMKVRQFVESKGGTLKGFVRYAVGEGIEKREDNFAEEVMNQVKGSN</sequence>
<protein>
    <recommendedName>
        <fullName evidence="1">Elongation factor Ts</fullName>
        <shortName evidence="1">EF-Ts</shortName>
    </recommendedName>
</protein>
<keyword id="KW-0963">Cytoplasm</keyword>
<keyword id="KW-0251">Elongation factor</keyword>
<keyword id="KW-0648">Protein biosynthesis</keyword>
<keyword id="KW-1185">Reference proteome</keyword>
<organism>
    <name type="scientific">Bacillus cereus (strain ATCC 14579 / DSM 31 / CCUG 7414 / JCM 2152 / NBRC 15305 / NCIMB 9373 / NCTC 2599 / NRRL B-3711)</name>
    <dbReference type="NCBI Taxonomy" id="226900"/>
    <lineage>
        <taxon>Bacteria</taxon>
        <taxon>Bacillati</taxon>
        <taxon>Bacillota</taxon>
        <taxon>Bacilli</taxon>
        <taxon>Bacillales</taxon>
        <taxon>Bacillaceae</taxon>
        <taxon>Bacillus</taxon>
        <taxon>Bacillus cereus group</taxon>
    </lineage>
</organism>
<accession>Q812X3</accession>
<gene>
    <name evidence="1" type="primary">tsf</name>
    <name type="ordered locus">BC_3824</name>
</gene>
<dbReference type="EMBL" id="AE016877">
    <property type="protein sequence ID" value="AAP10746.1"/>
    <property type="molecule type" value="Genomic_DNA"/>
</dbReference>
<dbReference type="RefSeq" id="NP_833545.1">
    <property type="nucleotide sequence ID" value="NC_004722.1"/>
</dbReference>
<dbReference type="RefSeq" id="WP_001018578.1">
    <property type="nucleotide sequence ID" value="NZ_CP138336.1"/>
</dbReference>
<dbReference type="SMR" id="Q812X3"/>
<dbReference type="STRING" id="226900.BC_3824"/>
<dbReference type="MetOSite" id="Q812X3"/>
<dbReference type="KEGG" id="bce:BC3824"/>
<dbReference type="PATRIC" id="fig|226900.8.peg.3943"/>
<dbReference type="HOGENOM" id="CLU_047155_0_2_9"/>
<dbReference type="OrthoDB" id="9808348at2"/>
<dbReference type="Proteomes" id="UP000001417">
    <property type="component" value="Chromosome"/>
</dbReference>
<dbReference type="GO" id="GO:0005737">
    <property type="term" value="C:cytoplasm"/>
    <property type="evidence" value="ECO:0007669"/>
    <property type="project" value="UniProtKB-SubCell"/>
</dbReference>
<dbReference type="GO" id="GO:0003746">
    <property type="term" value="F:translation elongation factor activity"/>
    <property type="evidence" value="ECO:0000318"/>
    <property type="project" value="GO_Central"/>
</dbReference>
<dbReference type="GO" id="GO:0006414">
    <property type="term" value="P:translational elongation"/>
    <property type="evidence" value="ECO:0000318"/>
    <property type="project" value="GO_Central"/>
</dbReference>
<dbReference type="CDD" id="cd14275">
    <property type="entry name" value="UBA_EF-Ts"/>
    <property type="match status" value="1"/>
</dbReference>
<dbReference type="FunFam" id="1.10.286.20:FF:000003">
    <property type="entry name" value="Elongation factor Ts"/>
    <property type="match status" value="1"/>
</dbReference>
<dbReference type="FunFam" id="1.10.8.10:FF:000001">
    <property type="entry name" value="Elongation factor Ts"/>
    <property type="match status" value="1"/>
</dbReference>
<dbReference type="FunFam" id="3.30.479.20:FF:000005">
    <property type="entry name" value="Elongation factor Ts"/>
    <property type="match status" value="1"/>
</dbReference>
<dbReference type="Gene3D" id="1.10.286.20">
    <property type="match status" value="1"/>
</dbReference>
<dbReference type="Gene3D" id="1.10.8.10">
    <property type="entry name" value="DNA helicase RuvA subunit, C-terminal domain"/>
    <property type="match status" value="1"/>
</dbReference>
<dbReference type="Gene3D" id="3.30.479.20">
    <property type="entry name" value="Elongation factor Ts, dimerisation domain"/>
    <property type="match status" value="2"/>
</dbReference>
<dbReference type="HAMAP" id="MF_00050">
    <property type="entry name" value="EF_Ts"/>
    <property type="match status" value="1"/>
</dbReference>
<dbReference type="InterPro" id="IPR036402">
    <property type="entry name" value="EF-Ts_dimer_sf"/>
</dbReference>
<dbReference type="InterPro" id="IPR001816">
    <property type="entry name" value="Transl_elong_EFTs/EF1B"/>
</dbReference>
<dbReference type="InterPro" id="IPR014039">
    <property type="entry name" value="Transl_elong_EFTs/EF1B_dimer"/>
</dbReference>
<dbReference type="InterPro" id="IPR018101">
    <property type="entry name" value="Transl_elong_Ts_CS"/>
</dbReference>
<dbReference type="InterPro" id="IPR009060">
    <property type="entry name" value="UBA-like_sf"/>
</dbReference>
<dbReference type="NCBIfam" id="TIGR00116">
    <property type="entry name" value="tsf"/>
    <property type="match status" value="1"/>
</dbReference>
<dbReference type="PANTHER" id="PTHR11741">
    <property type="entry name" value="ELONGATION FACTOR TS"/>
    <property type="match status" value="1"/>
</dbReference>
<dbReference type="PANTHER" id="PTHR11741:SF0">
    <property type="entry name" value="ELONGATION FACTOR TS, MITOCHONDRIAL"/>
    <property type="match status" value="1"/>
</dbReference>
<dbReference type="Pfam" id="PF00889">
    <property type="entry name" value="EF_TS"/>
    <property type="match status" value="1"/>
</dbReference>
<dbReference type="SUPFAM" id="SSF54713">
    <property type="entry name" value="Elongation factor Ts (EF-Ts), dimerisation domain"/>
    <property type="match status" value="2"/>
</dbReference>
<dbReference type="SUPFAM" id="SSF46934">
    <property type="entry name" value="UBA-like"/>
    <property type="match status" value="1"/>
</dbReference>
<dbReference type="PROSITE" id="PS01126">
    <property type="entry name" value="EF_TS_1"/>
    <property type="match status" value="1"/>
</dbReference>
<dbReference type="PROSITE" id="PS01127">
    <property type="entry name" value="EF_TS_2"/>
    <property type="match status" value="1"/>
</dbReference>
<reference key="1">
    <citation type="journal article" date="2003" name="Nature">
        <title>Genome sequence of Bacillus cereus and comparative analysis with Bacillus anthracis.</title>
        <authorList>
            <person name="Ivanova N."/>
            <person name="Sorokin A."/>
            <person name="Anderson I."/>
            <person name="Galleron N."/>
            <person name="Candelon B."/>
            <person name="Kapatral V."/>
            <person name="Bhattacharyya A."/>
            <person name="Reznik G."/>
            <person name="Mikhailova N."/>
            <person name="Lapidus A."/>
            <person name="Chu L."/>
            <person name="Mazur M."/>
            <person name="Goltsman E."/>
            <person name="Larsen N."/>
            <person name="D'Souza M."/>
            <person name="Walunas T."/>
            <person name="Grechkin Y."/>
            <person name="Pusch G."/>
            <person name="Haselkorn R."/>
            <person name="Fonstein M."/>
            <person name="Ehrlich S.D."/>
            <person name="Overbeek R."/>
            <person name="Kyrpides N.C."/>
        </authorList>
    </citation>
    <scope>NUCLEOTIDE SEQUENCE [LARGE SCALE GENOMIC DNA]</scope>
    <source>
        <strain>ATCC 14579 / DSM 31 / CCUG 7414 / JCM 2152 / NBRC 15305 / NCIMB 9373 / NCTC 2599 / NRRL B-3711</strain>
    </source>
</reference>
<proteinExistence type="inferred from homology"/>
<name>EFTS_BACCR</name>
<comment type="function">
    <text evidence="1">Associates with the EF-Tu.GDP complex and induces the exchange of GDP to GTP. It remains bound to the aminoacyl-tRNA.EF-Tu.GTP complex up to the GTP hydrolysis stage on the ribosome.</text>
</comment>
<comment type="subcellular location">
    <subcellularLocation>
        <location evidence="1">Cytoplasm</location>
    </subcellularLocation>
</comment>
<comment type="similarity">
    <text evidence="1">Belongs to the EF-Ts family.</text>
</comment>